<protein>
    <recommendedName>
        <fullName evidence="1">1-deoxy-D-xylulose 5-phosphate reductoisomerase</fullName>
        <shortName evidence="1">DXP reductoisomerase</shortName>
        <ecNumber evidence="1">1.1.1.267</ecNumber>
    </recommendedName>
    <alternativeName>
        <fullName evidence="1">1-deoxyxylulose-5-phosphate reductoisomerase</fullName>
    </alternativeName>
    <alternativeName>
        <fullName evidence="1">2-C-methyl-D-erythritol 4-phosphate synthase</fullName>
    </alternativeName>
</protein>
<accession>B2I325</accession>
<reference key="1">
    <citation type="journal article" date="2008" name="Antimicrob. Agents Chemother.">
        <title>Whole-genome pyrosequencing of an epidemic multidrug-resistant Acinetobacter baumannii strain belonging to the European clone II group.</title>
        <authorList>
            <person name="Iacono M."/>
            <person name="Villa L."/>
            <person name="Fortini D."/>
            <person name="Bordoni R."/>
            <person name="Imperi F."/>
            <person name="Bonnal R.J."/>
            <person name="Sicheritz-Ponten T."/>
            <person name="De Bellis G."/>
            <person name="Visca P."/>
            <person name="Cassone A."/>
            <person name="Carattoli A."/>
        </authorList>
    </citation>
    <scope>NUCLEOTIDE SEQUENCE [LARGE SCALE GENOMIC DNA]</scope>
    <source>
        <strain>ACICU</strain>
    </source>
</reference>
<evidence type="ECO:0000255" key="1">
    <source>
        <dbReference type="HAMAP-Rule" id="MF_00183"/>
    </source>
</evidence>
<feature type="chain" id="PRO_1000098467" description="1-deoxy-D-xylulose 5-phosphate reductoisomerase">
    <location>
        <begin position="1"/>
        <end position="398"/>
    </location>
</feature>
<feature type="binding site" evidence="1">
    <location>
        <position position="11"/>
    </location>
    <ligand>
        <name>NADPH</name>
        <dbReference type="ChEBI" id="CHEBI:57783"/>
    </ligand>
</feature>
<feature type="binding site" evidence="1">
    <location>
        <position position="12"/>
    </location>
    <ligand>
        <name>NADPH</name>
        <dbReference type="ChEBI" id="CHEBI:57783"/>
    </ligand>
</feature>
<feature type="binding site" evidence="1">
    <location>
        <position position="13"/>
    </location>
    <ligand>
        <name>NADPH</name>
        <dbReference type="ChEBI" id="CHEBI:57783"/>
    </ligand>
</feature>
<feature type="binding site" evidence="1">
    <location>
        <position position="14"/>
    </location>
    <ligand>
        <name>NADPH</name>
        <dbReference type="ChEBI" id="CHEBI:57783"/>
    </ligand>
</feature>
<feature type="binding site" evidence="1">
    <location>
        <position position="125"/>
    </location>
    <ligand>
        <name>NADPH</name>
        <dbReference type="ChEBI" id="CHEBI:57783"/>
    </ligand>
</feature>
<feature type="binding site" evidence="1">
    <location>
        <position position="126"/>
    </location>
    <ligand>
        <name>1-deoxy-D-xylulose 5-phosphate</name>
        <dbReference type="ChEBI" id="CHEBI:57792"/>
    </ligand>
</feature>
<feature type="binding site" evidence="1">
    <location>
        <position position="127"/>
    </location>
    <ligand>
        <name>NADPH</name>
        <dbReference type="ChEBI" id="CHEBI:57783"/>
    </ligand>
</feature>
<feature type="binding site" evidence="1">
    <location>
        <position position="151"/>
    </location>
    <ligand>
        <name>Mn(2+)</name>
        <dbReference type="ChEBI" id="CHEBI:29035"/>
    </ligand>
</feature>
<feature type="binding site" evidence="1">
    <location>
        <position position="152"/>
    </location>
    <ligand>
        <name>1-deoxy-D-xylulose 5-phosphate</name>
        <dbReference type="ChEBI" id="CHEBI:57792"/>
    </ligand>
</feature>
<feature type="binding site" evidence="1">
    <location>
        <position position="153"/>
    </location>
    <ligand>
        <name>1-deoxy-D-xylulose 5-phosphate</name>
        <dbReference type="ChEBI" id="CHEBI:57792"/>
    </ligand>
</feature>
<feature type="binding site" evidence="1">
    <location>
        <position position="153"/>
    </location>
    <ligand>
        <name>Mn(2+)</name>
        <dbReference type="ChEBI" id="CHEBI:29035"/>
    </ligand>
</feature>
<feature type="binding site" evidence="1">
    <location>
        <position position="186"/>
    </location>
    <ligand>
        <name>1-deoxy-D-xylulose 5-phosphate</name>
        <dbReference type="ChEBI" id="CHEBI:57792"/>
    </ligand>
</feature>
<feature type="binding site" evidence="1">
    <location>
        <position position="209"/>
    </location>
    <ligand>
        <name>1-deoxy-D-xylulose 5-phosphate</name>
        <dbReference type="ChEBI" id="CHEBI:57792"/>
    </ligand>
</feature>
<feature type="binding site" evidence="1">
    <location>
        <position position="215"/>
    </location>
    <ligand>
        <name>NADPH</name>
        <dbReference type="ChEBI" id="CHEBI:57783"/>
    </ligand>
</feature>
<feature type="binding site" evidence="1">
    <location>
        <position position="222"/>
    </location>
    <ligand>
        <name>1-deoxy-D-xylulose 5-phosphate</name>
        <dbReference type="ChEBI" id="CHEBI:57792"/>
    </ligand>
</feature>
<feature type="binding site" evidence="1">
    <location>
        <position position="227"/>
    </location>
    <ligand>
        <name>1-deoxy-D-xylulose 5-phosphate</name>
        <dbReference type="ChEBI" id="CHEBI:57792"/>
    </ligand>
</feature>
<feature type="binding site" evidence="1">
    <location>
        <position position="228"/>
    </location>
    <ligand>
        <name>1-deoxy-D-xylulose 5-phosphate</name>
        <dbReference type="ChEBI" id="CHEBI:57792"/>
    </ligand>
</feature>
<feature type="binding site" evidence="1">
    <location>
        <position position="231"/>
    </location>
    <ligand>
        <name>1-deoxy-D-xylulose 5-phosphate</name>
        <dbReference type="ChEBI" id="CHEBI:57792"/>
    </ligand>
</feature>
<feature type="binding site" evidence="1">
    <location>
        <position position="231"/>
    </location>
    <ligand>
        <name>Mn(2+)</name>
        <dbReference type="ChEBI" id="CHEBI:29035"/>
    </ligand>
</feature>
<dbReference type="EC" id="1.1.1.267" evidence="1"/>
<dbReference type="EMBL" id="CP000863">
    <property type="protein sequence ID" value="ACC57406.1"/>
    <property type="molecule type" value="Genomic_DNA"/>
</dbReference>
<dbReference type="SMR" id="B2I325"/>
<dbReference type="KEGG" id="abc:ACICU_02094"/>
<dbReference type="HOGENOM" id="CLU_035714_4_0_6"/>
<dbReference type="UniPathway" id="UPA00056">
    <property type="reaction ID" value="UER00092"/>
</dbReference>
<dbReference type="Proteomes" id="UP000008839">
    <property type="component" value="Chromosome"/>
</dbReference>
<dbReference type="GO" id="GO:0030604">
    <property type="term" value="F:1-deoxy-D-xylulose-5-phosphate reductoisomerase activity"/>
    <property type="evidence" value="ECO:0007669"/>
    <property type="project" value="UniProtKB-UniRule"/>
</dbReference>
<dbReference type="GO" id="GO:0030145">
    <property type="term" value="F:manganese ion binding"/>
    <property type="evidence" value="ECO:0007669"/>
    <property type="project" value="TreeGrafter"/>
</dbReference>
<dbReference type="GO" id="GO:0070402">
    <property type="term" value="F:NADPH binding"/>
    <property type="evidence" value="ECO:0007669"/>
    <property type="project" value="InterPro"/>
</dbReference>
<dbReference type="GO" id="GO:0051484">
    <property type="term" value="P:isopentenyl diphosphate biosynthetic process, methylerythritol 4-phosphate pathway involved in terpenoid biosynthetic process"/>
    <property type="evidence" value="ECO:0007669"/>
    <property type="project" value="TreeGrafter"/>
</dbReference>
<dbReference type="FunFam" id="3.40.50.720:FF:000045">
    <property type="entry name" value="1-deoxy-D-xylulose 5-phosphate reductoisomerase"/>
    <property type="match status" value="1"/>
</dbReference>
<dbReference type="Gene3D" id="1.10.1740.10">
    <property type="match status" value="1"/>
</dbReference>
<dbReference type="Gene3D" id="3.40.50.720">
    <property type="entry name" value="NAD(P)-binding Rossmann-like Domain"/>
    <property type="match status" value="1"/>
</dbReference>
<dbReference type="HAMAP" id="MF_00183">
    <property type="entry name" value="DXP_reductoisom"/>
    <property type="match status" value="1"/>
</dbReference>
<dbReference type="InterPro" id="IPR003821">
    <property type="entry name" value="DXP_reductoisomerase"/>
</dbReference>
<dbReference type="InterPro" id="IPR013644">
    <property type="entry name" value="DXP_reductoisomerase_C"/>
</dbReference>
<dbReference type="InterPro" id="IPR013512">
    <property type="entry name" value="DXP_reductoisomerase_N"/>
</dbReference>
<dbReference type="InterPro" id="IPR026877">
    <property type="entry name" value="DXPR_C"/>
</dbReference>
<dbReference type="InterPro" id="IPR036169">
    <property type="entry name" value="DXPR_C_sf"/>
</dbReference>
<dbReference type="InterPro" id="IPR036291">
    <property type="entry name" value="NAD(P)-bd_dom_sf"/>
</dbReference>
<dbReference type="NCBIfam" id="TIGR00243">
    <property type="entry name" value="Dxr"/>
    <property type="match status" value="1"/>
</dbReference>
<dbReference type="NCBIfam" id="NF003938">
    <property type="entry name" value="PRK05447.1-1"/>
    <property type="match status" value="1"/>
</dbReference>
<dbReference type="NCBIfam" id="NF009114">
    <property type="entry name" value="PRK12464.1"/>
    <property type="match status" value="1"/>
</dbReference>
<dbReference type="PANTHER" id="PTHR30525">
    <property type="entry name" value="1-DEOXY-D-XYLULOSE 5-PHOSPHATE REDUCTOISOMERASE"/>
    <property type="match status" value="1"/>
</dbReference>
<dbReference type="PANTHER" id="PTHR30525:SF0">
    <property type="entry name" value="1-DEOXY-D-XYLULOSE 5-PHOSPHATE REDUCTOISOMERASE, CHLOROPLASTIC"/>
    <property type="match status" value="1"/>
</dbReference>
<dbReference type="Pfam" id="PF08436">
    <property type="entry name" value="DXP_redisom_C"/>
    <property type="match status" value="1"/>
</dbReference>
<dbReference type="Pfam" id="PF02670">
    <property type="entry name" value="DXP_reductoisom"/>
    <property type="match status" value="1"/>
</dbReference>
<dbReference type="Pfam" id="PF13288">
    <property type="entry name" value="DXPR_C"/>
    <property type="match status" value="1"/>
</dbReference>
<dbReference type="PIRSF" id="PIRSF006205">
    <property type="entry name" value="Dxp_reductismrs"/>
    <property type="match status" value="1"/>
</dbReference>
<dbReference type="SUPFAM" id="SSF69055">
    <property type="entry name" value="1-deoxy-D-xylulose-5-phosphate reductoisomerase, C-terminal domain"/>
    <property type="match status" value="1"/>
</dbReference>
<dbReference type="SUPFAM" id="SSF55347">
    <property type="entry name" value="Glyceraldehyde-3-phosphate dehydrogenase-like, C-terminal domain"/>
    <property type="match status" value="1"/>
</dbReference>
<dbReference type="SUPFAM" id="SSF51735">
    <property type="entry name" value="NAD(P)-binding Rossmann-fold domains"/>
    <property type="match status" value="1"/>
</dbReference>
<organism>
    <name type="scientific">Acinetobacter baumannii (strain ACICU)</name>
    <dbReference type="NCBI Taxonomy" id="405416"/>
    <lineage>
        <taxon>Bacteria</taxon>
        <taxon>Pseudomonadati</taxon>
        <taxon>Pseudomonadota</taxon>
        <taxon>Gammaproteobacteria</taxon>
        <taxon>Moraxellales</taxon>
        <taxon>Moraxellaceae</taxon>
        <taxon>Acinetobacter</taxon>
        <taxon>Acinetobacter calcoaceticus/baumannii complex</taxon>
    </lineage>
</organism>
<comment type="function">
    <text evidence="1">Catalyzes the NADPH-dependent rearrangement and reduction of 1-deoxy-D-xylulose-5-phosphate (DXP) to 2-C-methyl-D-erythritol 4-phosphate (MEP).</text>
</comment>
<comment type="catalytic activity">
    <reaction evidence="1">
        <text>2-C-methyl-D-erythritol 4-phosphate + NADP(+) = 1-deoxy-D-xylulose 5-phosphate + NADPH + H(+)</text>
        <dbReference type="Rhea" id="RHEA:13717"/>
        <dbReference type="ChEBI" id="CHEBI:15378"/>
        <dbReference type="ChEBI" id="CHEBI:57783"/>
        <dbReference type="ChEBI" id="CHEBI:57792"/>
        <dbReference type="ChEBI" id="CHEBI:58262"/>
        <dbReference type="ChEBI" id="CHEBI:58349"/>
        <dbReference type="EC" id="1.1.1.267"/>
    </reaction>
    <physiologicalReaction direction="right-to-left" evidence="1">
        <dbReference type="Rhea" id="RHEA:13719"/>
    </physiologicalReaction>
</comment>
<comment type="cofactor">
    <cofactor evidence="1">
        <name>Mg(2+)</name>
        <dbReference type="ChEBI" id="CHEBI:18420"/>
    </cofactor>
    <cofactor evidence="1">
        <name>Mn(2+)</name>
        <dbReference type="ChEBI" id="CHEBI:29035"/>
    </cofactor>
</comment>
<comment type="pathway">
    <text evidence="1">Isoprenoid biosynthesis; isopentenyl diphosphate biosynthesis via DXP pathway; isopentenyl diphosphate from 1-deoxy-D-xylulose 5-phosphate: step 1/6.</text>
</comment>
<comment type="similarity">
    <text evidence="1">Belongs to the DXR family.</text>
</comment>
<name>DXR_ACIBC</name>
<proteinExistence type="inferred from homology"/>
<sequence length="398" mass="43052">MTQSVCILGVTGSIGRSTLKILGQHPDKYSVFAVSAHSRISELVEICKQFRPKVVVVPEQKIVELKTLFAQQNISDIDVLAGQEGLVDIASHTDVDIVMAAIVGAAGLLPTLAAVKAGKRVLLANKEALVMSGEIMMQAARDHQALLLPVDSEHNAIFQSLPHNYLQADRTGQPQLGVSKILLTASGGPFLNHSLEQLTHVTPQQACKHPNWSMGQKISVDSATLMNKGLELIEACHLFSISEHFVTVVVHPQSIIHSMVQYVDGSTLAQMGNPDMCTPIAHALAWPERLQTNVPALDLFEYSQLNFQAPDTQKFPALNLARQAMRAGGLAPTILNAANEIAVEAFLMERIGFTSIPQVVEHTLEKLENAAAESIECILDKDKVARSVAQQYISSIGG</sequence>
<keyword id="KW-0414">Isoprene biosynthesis</keyword>
<keyword id="KW-0464">Manganese</keyword>
<keyword id="KW-0479">Metal-binding</keyword>
<keyword id="KW-0521">NADP</keyword>
<keyword id="KW-0560">Oxidoreductase</keyword>
<gene>
    <name evidence="1" type="primary">dxr</name>
    <name type="ordered locus">ACICU_02094</name>
</gene>